<keyword id="KW-0378">Hydrolase</keyword>
<keyword id="KW-1017">Isopeptide bond</keyword>
<keyword id="KW-0479">Metal-binding</keyword>
<keyword id="KW-1185">Reference proteome</keyword>
<keyword id="KW-0832">Ubl conjugation</keyword>
<keyword id="KW-0862">Zinc</keyword>
<comment type="cofactor">
    <cofactor evidence="1">
        <name>Zn(2+)</name>
        <dbReference type="ChEBI" id="CHEBI:29105"/>
    </cofactor>
    <text evidence="1">Binds 2 Zn(2+) ions per subunit.</text>
</comment>
<comment type="similarity">
    <text evidence="3">Belongs to the peptidase M20 family.</text>
</comment>
<evidence type="ECO:0000250" key="1"/>
<evidence type="ECO:0000269" key="2">
    <source>
    </source>
</evidence>
<evidence type="ECO:0000305" key="3"/>
<organism>
    <name type="scientific">Mycolicibacterium smegmatis (strain ATCC 700084 / mc(2)155)</name>
    <name type="common">Mycobacterium smegmatis</name>
    <dbReference type="NCBI Taxonomy" id="246196"/>
    <lineage>
        <taxon>Bacteria</taxon>
        <taxon>Bacillati</taxon>
        <taxon>Actinomycetota</taxon>
        <taxon>Actinomycetes</taxon>
        <taxon>Mycobacteriales</taxon>
        <taxon>Mycobacteriaceae</taxon>
        <taxon>Mycolicibacterium</taxon>
    </lineage>
</organism>
<dbReference type="EC" id="3.5.-.-"/>
<dbReference type="EMBL" id="CP000480">
    <property type="protein sequence ID" value="ABK75477.1"/>
    <property type="molecule type" value="Genomic_DNA"/>
</dbReference>
<dbReference type="EMBL" id="CP001663">
    <property type="protein sequence ID" value="AFP40361.1"/>
    <property type="molecule type" value="Genomic_DNA"/>
</dbReference>
<dbReference type="RefSeq" id="WP_011729456.1">
    <property type="nucleotide sequence ID" value="NZ_SIJM01000044.1"/>
</dbReference>
<dbReference type="RefSeq" id="YP_888281.1">
    <property type="nucleotide sequence ID" value="NC_008596.1"/>
</dbReference>
<dbReference type="SMR" id="A0QZE3"/>
<dbReference type="STRING" id="246196.MSMEG_3995"/>
<dbReference type="PaxDb" id="246196-MSMEI_3903"/>
<dbReference type="KEGG" id="msb:LJ00_19845"/>
<dbReference type="KEGG" id="msg:MSMEI_3903"/>
<dbReference type="KEGG" id="msm:MSMEG_3995"/>
<dbReference type="PATRIC" id="fig|246196.19.peg.3934"/>
<dbReference type="eggNOG" id="COG0624">
    <property type="taxonomic scope" value="Bacteria"/>
</dbReference>
<dbReference type="OrthoDB" id="9808195at2"/>
<dbReference type="Proteomes" id="UP000000757">
    <property type="component" value="Chromosome"/>
</dbReference>
<dbReference type="Proteomes" id="UP000006158">
    <property type="component" value="Chromosome"/>
</dbReference>
<dbReference type="GO" id="GO:0016813">
    <property type="term" value="F:hydrolase activity, acting on carbon-nitrogen (but not peptide) bonds, in linear amidines"/>
    <property type="evidence" value="ECO:0007669"/>
    <property type="project" value="InterPro"/>
</dbReference>
<dbReference type="GO" id="GO:0046872">
    <property type="term" value="F:metal ion binding"/>
    <property type="evidence" value="ECO:0007669"/>
    <property type="project" value="UniProtKB-KW"/>
</dbReference>
<dbReference type="CDD" id="cd03884">
    <property type="entry name" value="M20_bAS"/>
    <property type="match status" value="1"/>
</dbReference>
<dbReference type="Gene3D" id="3.30.70.360">
    <property type="match status" value="1"/>
</dbReference>
<dbReference type="Gene3D" id="3.40.630.10">
    <property type="entry name" value="Zn peptidases"/>
    <property type="match status" value="1"/>
</dbReference>
<dbReference type="InterPro" id="IPR010158">
    <property type="entry name" value="Amidase_Cbmase"/>
</dbReference>
<dbReference type="InterPro" id="IPR036264">
    <property type="entry name" value="Bact_exopeptidase_dim_dom"/>
</dbReference>
<dbReference type="InterPro" id="IPR002933">
    <property type="entry name" value="Peptidase_M20"/>
</dbReference>
<dbReference type="NCBIfam" id="TIGR01879">
    <property type="entry name" value="hydantase"/>
    <property type="match status" value="1"/>
</dbReference>
<dbReference type="NCBIfam" id="NF006772">
    <property type="entry name" value="PRK09290.2-1"/>
    <property type="match status" value="1"/>
</dbReference>
<dbReference type="PANTHER" id="PTHR32494:SF5">
    <property type="entry name" value="ALLANTOATE AMIDOHYDROLASE"/>
    <property type="match status" value="1"/>
</dbReference>
<dbReference type="PANTHER" id="PTHR32494">
    <property type="entry name" value="ALLANTOATE DEIMINASE-RELATED"/>
    <property type="match status" value="1"/>
</dbReference>
<dbReference type="Pfam" id="PF01546">
    <property type="entry name" value="Peptidase_M20"/>
    <property type="match status" value="1"/>
</dbReference>
<dbReference type="PIRSF" id="PIRSF001235">
    <property type="entry name" value="Amidase_carbamoylase"/>
    <property type="match status" value="1"/>
</dbReference>
<dbReference type="SUPFAM" id="SSF55031">
    <property type="entry name" value="Bacterial exopeptidase dimerisation domain"/>
    <property type="match status" value="1"/>
</dbReference>
<dbReference type="SUPFAM" id="SSF53187">
    <property type="entry name" value="Zn-dependent exopeptidases"/>
    <property type="match status" value="1"/>
</dbReference>
<proteinExistence type="evidence at protein level"/>
<sequence length="438" mass="47337">MTVPVNATNLRIPLDTGRDREFLDSWAELEAIGATPAGGVERQAGTAEDGQMRDWLSRWLRTRGFSVEVDPIGNLFGLLEFNPGAPYVLVGSHLDSQPRGGRFDGAYGVLAGAVAADRTRRYVTRSGFTPRYNVAVVDWFNEEGSRFKPSMMGSAVFTGTLDLEEALNTTDDDGVSVRDALAAINGIGDREVFSSTGPRQLAAYAEIHIEQGRELEKNNVTIGLVDRTWAANKYELNVVGIQGHTGATAIEDRQDALLGAALIVVALRDIADEFGEELHTSCGQLTVLPNSPVVVPREVHMHLDLRSDNDELLAAADAALRRRIAEAEIRAGVKVEHRKAHVWPGHHYQPQGVELARDAANDLGISSMLVQTRAGHDSTNMKEIVPSVMLFVPSVEGISHAEAEYTSDEDLCSGVDLLTEVVARMLDGSLDAAGAGHP</sequence>
<protein>
    <recommendedName>
        <fullName>Putative hydrolase MSMEG_3995/MSMEI_3903</fullName>
        <ecNumber>3.5.-.-</ecNumber>
    </recommendedName>
</protein>
<reference key="1">
    <citation type="submission" date="2006-10" db="EMBL/GenBank/DDBJ databases">
        <authorList>
            <person name="Fleischmann R.D."/>
            <person name="Dodson R.J."/>
            <person name="Haft D.H."/>
            <person name="Merkel J.S."/>
            <person name="Nelson W.C."/>
            <person name="Fraser C.M."/>
        </authorList>
    </citation>
    <scope>NUCLEOTIDE SEQUENCE [LARGE SCALE GENOMIC DNA]</scope>
    <source>
        <strain>ATCC 700084 / mc(2)155</strain>
    </source>
</reference>
<reference key="2">
    <citation type="journal article" date="2007" name="Genome Biol.">
        <title>Interrupted coding sequences in Mycobacterium smegmatis: authentic mutations or sequencing errors?</title>
        <authorList>
            <person name="Deshayes C."/>
            <person name="Perrodou E."/>
            <person name="Gallien S."/>
            <person name="Euphrasie D."/>
            <person name="Schaeffer C."/>
            <person name="Van-Dorsselaer A."/>
            <person name="Poch O."/>
            <person name="Lecompte O."/>
            <person name="Reyrat J.-M."/>
        </authorList>
    </citation>
    <scope>NUCLEOTIDE SEQUENCE [LARGE SCALE GENOMIC DNA]</scope>
    <source>
        <strain>ATCC 700084 / mc(2)155</strain>
    </source>
</reference>
<reference key="3">
    <citation type="journal article" date="2009" name="Genome Res.">
        <title>Ortho-proteogenomics: multiple proteomes investigation through orthology and a new MS-based protocol.</title>
        <authorList>
            <person name="Gallien S."/>
            <person name="Perrodou E."/>
            <person name="Carapito C."/>
            <person name="Deshayes C."/>
            <person name="Reyrat J.-M."/>
            <person name="Van Dorsselaer A."/>
            <person name="Poch O."/>
            <person name="Schaeffer C."/>
            <person name="Lecompte O."/>
        </authorList>
    </citation>
    <scope>NUCLEOTIDE SEQUENCE [LARGE SCALE GENOMIC DNA]</scope>
    <source>
        <strain>ATCC 700084 / mc(2)155</strain>
    </source>
</reference>
<reference key="4">
    <citation type="journal article" date="2010" name="Mol. Biosyst.">
        <title>Expansion of the mycobacterial 'PUPylome'.</title>
        <authorList>
            <person name="Watrous J."/>
            <person name="Burns K."/>
            <person name="Liu W.T."/>
            <person name="Patel A."/>
            <person name="Hook V."/>
            <person name="Bafna V."/>
            <person name="Barry C.E. III"/>
            <person name="Bark S."/>
            <person name="Dorrestein P.C."/>
        </authorList>
    </citation>
    <scope>PUPYLATION AT LYS-217</scope>
    <scope>IDENTIFICATION BY MASS SPECTROMETRY</scope>
</reference>
<accession>A0QZE3</accession>
<accession>I7GB47</accession>
<gene>
    <name type="ordered locus">MSMEG_3995</name>
    <name type="ordered locus">MSMEI_3903</name>
</gene>
<name>Y3995_MYCS2</name>
<feature type="chain" id="PRO_0000396813" description="Putative hydrolase MSMEG_3995/MSMEI_3903">
    <location>
        <begin position="1"/>
        <end position="438"/>
    </location>
</feature>
<feature type="binding site" evidence="1">
    <location>
        <position position="95"/>
    </location>
    <ligand>
        <name>Zn(2+)</name>
        <dbReference type="ChEBI" id="CHEBI:29105"/>
        <label>1</label>
    </ligand>
</feature>
<feature type="binding site" evidence="1">
    <location>
        <position position="104"/>
    </location>
    <ligand>
        <name>Zn(2+)</name>
        <dbReference type="ChEBI" id="CHEBI:29105"/>
        <label>1</label>
    </ligand>
</feature>
<feature type="binding site" evidence="1">
    <location>
        <position position="104"/>
    </location>
    <ligand>
        <name>Zn(2+)</name>
        <dbReference type="ChEBI" id="CHEBI:29105"/>
        <label>2</label>
    </ligand>
</feature>
<feature type="binding site" evidence="1">
    <location>
        <position position="143"/>
    </location>
    <ligand>
        <name>Zn(2+)</name>
        <dbReference type="ChEBI" id="CHEBI:29105"/>
        <label>2</label>
    </ligand>
</feature>
<feature type="binding site" evidence="1">
    <location>
        <position position="208"/>
    </location>
    <ligand>
        <name>Zn(2+)</name>
        <dbReference type="ChEBI" id="CHEBI:29105"/>
        <label>1</label>
    </ligand>
</feature>
<feature type="binding site" evidence="1">
    <location>
        <position position="400"/>
    </location>
    <ligand>
        <name>Zn(2+)</name>
        <dbReference type="ChEBI" id="CHEBI:29105"/>
        <label>2</label>
    </ligand>
</feature>
<feature type="cross-link" description="Isoglutamyl lysine isopeptide (Lys-Gln) (interchain with Q-Cter in protein Pup)" evidence="2">
    <location>
        <position position="217"/>
    </location>
</feature>